<keyword id="KW-0687">Ribonucleoprotein</keyword>
<keyword id="KW-0689">Ribosomal protein</keyword>
<organism>
    <name type="scientific">Mycobacterium bovis (strain BCG / Pasteur 1173P2)</name>
    <dbReference type="NCBI Taxonomy" id="410289"/>
    <lineage>
        <taxon>Bacteria</taxon>
        <taxon>Bacillati</taxon>
        <taxon>Actinomycetota</taxon>
        <taxon>Actinomycetes</taxon>
        <taxon>Mycobacteriales</taxon>
        <taxon>Mycobacteriaceae</taxon>
        <taxon>Mycobacterium</taxon>
        <taxon>Mycobacterium tuberculosis complex</taxon>
    </lineage>
</organism>
<name>RL19_MYCBP</name>
<gene>
    <name evidence="1" type="primary">rplS</name>
    <name type="ordered locus">BCG_2925c</name>
</gene>
<evidence type="ECO:0000255" key="1">
    <source>
        <dbReference type="HAMAP-Rule" id="MF_00402"/>
    </source>
</evidence>
<evidence type="ECO:0000305" key="2"/>
<accession>A1KMP8</accession>
<dbReference type="EMBL" id="AM408590">
    <property type="protein sequence ID" value="CAL72914.1"/>
    <property type="molecule type" value="Genomic_DNA"/>
</dbReference>
<dbReference type="RefSeq" id="WP_003414717.1">
    <property type="nucleotide sequence ID" value="NC_008769.1"/>
</dbReference>
<dbReference type="SMR" id="A1KMP8"/>
<dbReference type="GeneID" id="45426891"/>
<dbReference type="KEGG" id="mbb:BCG_2925c"/>
<dbReference type="HOGENOM" id="CLU_103507_2_1_11"/>
<dbReference type="Proteomes" id="UP000001472">
    <property type="component" value="Chromosome"/>
</dbReference>
<dbReference type="GO" id="GO:0022625">
    <property type="term" value="C:cytosolic large ribosomal subunit"/>
    <property type="evidence" value="ECO:0007669"/>
    <property type="project" value="TreeGrafter"/>
</dbReference>
<dbReference type="GO" id="GO:0003735">
    <property type="term" value="F:structural constituent of ribosome"/>
    <property type="evidence" value="ECO:0007669"/>
    <property type="project" value="InterPro"/>
</dbReference>
<dbReference type="GO" id="GO:0006412">
    <property type="term" value="P:translation"/>
    <property type="evidence" value="ECO:0007669"/>
    <property type="project" value="UniProtKB-UniRule"/>
</dbReference>
<dbReference type="FunFam" id="2.30.30.790:FF:000001">
    <property type="entry name" value="50S ribosomal protein L19"/>
    <property type="match status" value="1"/>
</dbReference>
<dbReference type="Gene3D" id="2.30.30.790">
    <property type="match status" value="1"/>
</dbReference>
<dbReference type="HAMAP" id="MF_00402">
    <property type="entry name" value="Ribosomal_bL19"/>
    <property type="match status" value="1"/>
</dbReference>
<dbReference type="InterPro" id="IPR001857">
    <property type="entry name" value="Ribosomal_bL19"/>
</dbReference>
<dbReference type="InterPro" id="IPR018257">
    <property type="entry name" value="Ribosomal_bL19_CS"/>
</dbReference>
<dbReference type="InterPro" id="IPR038657">
    <property type="entry name" value="Ribosomal_bL19_sf"/>
</dbReference>
<dbReference type="InterPro" id="IPR008991">
    <property type="entry name" value="Translation_prot_SH3-like_sf"/>
</dbReference>
<dbReference type="NCBIfam" id="TIGR01024">
    <property type="entry name" value="rplS_bact"/>
    <property type="match status" value="1"/>
</dbReference>
<dbReference type="PANTHER" id="PTHR15680:SF9">
    <property type="entry name" value="LARGE RIBOSOMAL SUBUNIT PROTEIN BL19M"/>
    <property type="match status" value="1"/>
</dbReference>
<dbReference type="PANTHER" id="PTHR15680">
    <property type="entry name" value="RIBOSOMAL PROTEIN L19"/>
    <property type="match status" value="1"/>
</dbReference>
<dbReference type="Pfam" id="PF01245">
    <property type="entry name" value="Ribosomal_L19"/>
    <property type="match status" value="1"/>
</dbReference>
<dbReference type="PIRSF" id="PIRSF002191">
    <property type="entry name" value="Ribosomal_L19"/>
    <property type="match status" value="1"/>
</dbReference>
<dbReference type="PRINTS" id="PR00061">
    <property type="entry name" value="RIBOSOMALL19"/>
</dbReference>
<dbReference type="SUPFAM" id="SSF50104">
    <property type="entry name" value="Translation proteins SH3-like domain"/>
    <property type="match status" value="1"/>
</dbReference>
<dbReference type="PROSITE" id="PS01015">
    <property type="entry name" value="RIBOSOMAL_L19"/>
    <property type="match status" value="1"/>
</dbReference>
<protein>
    <recommendedName>
        <fullName evidence="1">Large ribosomal subunit protein bL19</fullName>
    </recommendedName>
    <alternativeName>
        <fullName evidence="2">50S ribosomal protein L19</fullName>
    </alternativeName>
</protein>
<proteinExistence type="inferred from homology"/>
<reference key="1">
    <citation type="journal article" date="2007" name="Proc. Natl. Acad. Sci. U.S.A.">
        <title>Genome plasticity of BCG and impact on vaccine efficacy.</title>
        <authorList>
            <person name="Brosch R."/>
            <person name="Gordon S.V."/>
            <person name="Garnier T."/>
            <person name="Eiglmeier K."/>
            <person name="Frigui W."/>
            <person name="Valenti P."/>
            <person name="Dos Santos S."/>
            <person name="Duthoy S."/>
            <person name="Lacroix C."/>
            <person name="Garcia-Pelayo C."/>
            <person name="Inwald J.K."/>
            <person name="Golby P."/>
            <person name="Garcia J.N."/>
            <person name="Hewinson R.G."/>
            <person name="Behr M.A."/>
            <person name="Quail M.A."/>
            <person name="Churcher C."/>
            <person name="Barrell B.G."/>
            <person name="Parkhill J."/>
            <person name="Cole S.T."/>
        </authorList>
    </citation>
    <scope>NUCLEOTIDE SEQUENCE [LARGE SCALE GENOMIC DNA]</scope>
    <source>
        <strain>BCG / Pasteur 1173P2</strain>
    </source>
</reference>
<sequence length="113" mass="13013">MNRLDFVDKPSLRDDIPAFNPGDTINVHVKVIEGAKERLQVFKGVVIRRQGGGIRETFTVRKESYGVGVERTFPVHSPNIDHIEVVTRGDVRRAKLYYLRELRGKKAKIKEKR</sequence>
<feature type="chain" id="PRO_1000049699" description="Large ribosomal subunit protein bL19">
    <location>
        <begin position="1"/>
        <end position="113"/>
    </location>
</feature>
<comment type="function">
    <text evidence="1">This protein is located at the 30S-50S ribosomal subunit interface and may play a role in the structure and function of the aminoacyl-tRNA binding site.</text>
</comment>
<comment type="similarity">
    <text evidence="1">Belongs to the bacterial ribosomal protein bL19 family.</text>
</comment>